<name>RL5_BACP2</name>
<sequence length="179" mass="20173">MNRLKEKYVKEITPALVSKFEYKSVMQVPKIEKIVINMGVGDAVQNAKAIDTAVEELTFIAGQKPVVTRAKKSIAGFRLREGMPIGAKVTLRGERMYDFLDKLISVSLPRVRDFRGISKKSFDGRGNYTLGIKEQLIFPEIDYDKVTKVRGMDIVIVTTANTDEEARELLTQVGMPFQK</sequence>
<dbReference type="EMBL" id="CP000813">
    <property type="protein sequence ID" value="ABV60814.1"/>
    <property type="molecule type" value="Genomic_DNA"/>
</dbReference>
<dbReference type="RefSeq" id="WP_003217159.1">
    <property type="nucleotide sequence ID" value="NZ_VEIS01000020.1"/>
</dbReference>
<dbReference type="SMR" id="A8F997"/>
<dbReference type="STRING" id="315750.BPUM_0114"/>
<dbReference type="GeneID" id="66361745"/>
<dbReference type="KEGG" id="bpu:BPUM_0114"/>
<dbReference type="eggNOG" id="COG0094">
    <property type="taxonomic scope" value="Bacteria"/>
</dbReference>
<dbReference type="HOGENOM" id="CLU_061015_2_1_9"/>
<dbReference type="OrthoDB" id="9806626at2"/>
<dbReference type="Proteomes" id="UP000001355">
    <property type="component" value="Chromosome"/>
</dbReference>
<dbReference type="GO" id="GO:1990904">
    <property type="term" value="C:ribonucleoprotein complex"/>
    <property type="evidence" value="ECO:0007669"/>
    <property type="project" value="UniProtKB-KW"/>
</dbReference>
<dbReference type="GO" id="GO:0005840">
    <property type="term" value="C:ribosome"/>
    <property type="evidence" value="ECO:0007669"/>
    <property type="project" value="UniProtKB-KW"/>
</dbReference>
<dbReference type="GO" id="GO:0019843">
    <property type="term" value="F:rRNA binding"/>
    <property type="evidence" value="ECO:0007669"/>
    <property type="project" value="UniProtKB-UniRule"/>
</dbReference>
<dbReference type="GO" id="GO:0003735">
    <property type="term" value="F:structural constituent of ribosome"/>
    <property type="evidence" value="ECO:0007669"/>
    <property type="project" value="InterPro"/>
</dbReference>
<dbReference type="GO" id="GO:0000049">
    <property type="term" value="F:tRNA binding"/>
    <property type="evidence" value="ECO:0007669"/>
    <property type="project" value="UniProtKB-UniRule"/>
</dbReference>
<dbReference type="GO" id="GO:0006412">
    <property type="term" value="P:translation"/>
    <property type="evidence" value="ECO:0007669"/>
    <property type="project" value="UniProtKB-UniRule"/>
</dbReference>
<dbReference type="FunFam" id="3.30.1440.10:FF:000001">
    <property type="entry name" value="50S ribosomal protein L5"/>
    <property type="match status" value="1"/>
</dbReference>
<dbReference type="Gene3D" id="3.30.1440.10">
    <property type="match status" value="1"/>
</dbReference>
<dbReference type="HAMAP" id="MF_01333_B">
    <property type="entry name" value="Ribosomal_uL5_B"/>
    <property type="match status" value="1"/>
</dbReference>
<dbReference type="InterPro" id="IPR002132">
    <property type="entry name" value="Ribosomal_uL5"/>
</dbReference>
<dbReference type="InterPro" id="IPR020930">
    <property type="entry name" value="Ribosomal_uL5_bac-type"/>
</dbReference>
<dbReference type="InterPro" id="IPR031309">
    <property type="entry name" value="Ribosomal_uL5_C"/>
</dbReference>
<dbReference type="InterPro" id="IPR020929">
    <property type="entry name" value="Ribosomal_uL5_CS"/>
</dbReference>
<dbReference type="InterPro" id="IPR022803">
    <property type="entry name" value="Ribosomal_uL5_dom_sf"/>
</dbReference>
<dbReference type="InterPro" id="IPR031310">
    <property type="entry name" value="Ribosomal_uL5_N"/>
</dbReference>
<dbReference type="NCBIfam" id="NF000585">
    <property type="entry name" value="PRK00010.1"/>
    <property type="match status" value="1"/>
</dbReference>
<dbReference type="PANTHER" id="PTHR11994">
    <property type="entry name" value="60S RIBOSOMAL PROTEIN L11-RELATED"/>
    <property type="match status" value="1"/>
</dbReference>
<dbReference type="Pfam" id="PF00281">
    <property type="entry name" value="Ribosomal_L5"/>
    <property type="match status" value="1"/>
</dbReference>
<dbReference type="Pfam" id="PF00673">
    <property type="entry name" value="Ribosomal_L5_C"/>
    <property type="match status" value="1"/>
</dbReference>
<dbReference type="PIRSF" id="PIRSF002161">
    <property type="entry name" value="Ribosomal_L5"/>
    <property type="match status" value="1"/>
</dbReference>
<dbReference type="SUPFAM" id="SSF55282">
    <property type="entry name" value="RL5-like"/>
    <property type="match status" value="1"/>
</dbReference>
<dbReference type="PROSITE" id="PS00358">
    <property type="entry name" value="RIBOSOMAL_L5"/>
    <property type="match status" value="1"/>
</dbReference>
<keyword id="KW-0687">Ribonucleoprotein</keyword>
<keyword id="KW-0689">Ribosomal protein</keyword>
<keyword id="KW-0694">RNA-binding</keyword>
<keyword id="KW-0699">rRNA-binding</keyword>
<keyword id="KW-0820">tRNA-binding</keyword>
<organism>
    <name type="scientific">Bacillus pumilus (strain SAFR-032)</name>
    <dbReference type="NCBI Taxonomy" id="315750"/>
    <lineage>
        <taxon>Bacteria</taxon>
        <taxon>Bacillati</taxon>
        <taxon>Bacillota</taxon>
        <taxon>Bacilli</taxon>
        <taxon>Bacillales</taxon>
        <taxon>Bacillaceae</taxon>
        <taxon>Bacillus</taxon>
    </lineage>
</organism>
<protein>
    <recommendedName>
        <fullName evidence="1">Large ribosomal subunit protein uL5</fullName>
    </recommendedName>
    <alternativeName>
        <fullName evidence="2">50S ribosomal protein L5</fullName>
    </alternativeName>
</protein>
<proteinExistence type="inferred from homology"/>
<reference key="1">
    <citation type="journal article" date="2007" name="PLoS ONE">
        <title>Paradoxical DNA repair and peroxide resistance gene conservation in Bacillus pumilus SAFR-032.</title>
        <authorList>
            <person name="Gioia J."/>
            <person name="Yerrapragada S."/>
            <person name="Qin X."/>
            <person name="Jiang H."/>
            <person name="Igboeli O.C."/>
            <person name="Muzny D."/>
            <person name="Dugan-Rocha S."/>
            <person name="Ding Y."/>
            <person name="Hawes A."/>
            <person name="Liu W."/>
            <person name="Perez L."/>
            <person name="Kovar C."/>
            <person name="Dinh H."/>
            <person name="Lee S."/>
            <person name="Nazareth L."/>
            <person name="Blyth P."/>
            <person name="Holder M."/>
            <person name="Buhay C."/>
            <person name="Tirumalai M.R."/>
            <person name="Liu Y."/>
            <person name="Dasgupta I."/>
            <person name="Bokhetache L."/>
            <person name="Fujita M."/>
            <person name="Karouia F."/>
            <person name="Eswara Moorthy P."/>
            <person name="Siefert J."/>
            <person name="Uzman A."/>
            <person name="Buzumbo P."/>
            <person name="Verma A."/>
            <person name="Zwiya H."/>
            <person name="McWilliams B.D."/>
            <person name="Olowu A."/>
            <person name="Clinkenbeard K.D."/>
            <person name="Newcombe D."/>
            <person name="Golebiewski L."/>
            <person name="Petrosino J.F."/>
            <person name="Nicholson W.L."/>
            <person name="Fox G.E."/>
            <person name="Venkateswaran K."/>
            <person name="Highlander S.K."/>
            <person name="Weinstock G.M."/>
        </authorList>
    </citation>
    <scope>NUCLEOTIDE SEQUENCE [LARGE SCALE GENOMIC DNA]</scope>
    <source>
        <strain>SAFR-032</strain>
    </source>
</reference>
<accession>A8F997</accession>
<gene>
    <name evidence="1" type="primary">rplE</name>
    <name type="ordered locus">BPUM_0114</name>
</gene>
<comment type="function">
    <text evidence="1">This is one of the proteins that bind and probably mediate the attachment of the 5S RNA into the large ribosomal subunit, where it forms part of the central protuberance. In the 70S ribosome it contacts protein S13 of the 30S subunit (bridge B1b), connecting the 2 subunits; this bridge is implicated in subunit movement. Contacts the P site tRNA; the 5S rRNA and some of its associated proteins might help stabilize positioning of ribosome-bound tRNAs.</text>
</comment>
<comment type="subunit">
    <text evidence="1">Part of the 50S ribosomal subunit; part of the 5S rRNA/L5/L18/L25 subcomplex. Contacts the 5S rRNA and the P site tRNA. Forms a bridge to the 30S subunit in the 70S ribosome.</text>
</comment>
<comment type="similarity">
    <text evidence="1">Belongs to the universal ribosomal protein uL5 family.</text>
</comment>
<evidence type="ECO:0000255" key="1">
    <source>
        <dbReference type="HAMAP-Rule" id="MF_01333"/>
    </source>
</evidence>
<evidence type="ECO:0000305" key="2"/>
<feature type="chain" id="PRO_1000067617" description="Large ribosomal subunit protein uL5">
    <location>
        <begin position="1"/>
        <end position="179"/>
    </location>
</feature>